<protein>
    <recommendedName>
        <fullName evidence="1">Geranylgeranylglyceryl phosphate synthase</fullName>
        <shortName evidence="1">GGGP synthase</shortName>
        <shortName evidence="1">GGGPS</shortName>
        <ecNumber evidence="1">2.5.1.41</ecNumber>
    </recommendedName>
    <alternativeName>
        <fullName evidence="1">(S)-3-O-geranylgeranylglyceryl phosphate synthase</fullName>
    </alternativeName>
    <alternativeName>
        <fullName evidence="1">Phosphoglycerol geranylgeranyltransferase</fullName>
    </alternativeName>
</protein>
<comment type="function">
    <text evidence="1">Prenyltransferase that catalyzes the transfer of the geranylgeranyl moiety of geranylgeranyl diphosphate (GGPP) to the C3 hydroxyl of sn-glycerol-1-phosphate (G1P). This reaction is the first ether-bond-formation step in the biosynthesis of archaeal membrane lipids.</text>
</comment>
<comment type="catalytic activity">
    <reaction evidence="1">
        <text>sn-glycerol 1-phosphate + (2E,6E,10E)-geranylgeranyl diphosphate = sn-3-O-(geranylgeranyl)glycerol 1-phosphate + diphosphate</text>
        <dbReference type="Rhea" id="RHEA:23404"/>
        <dbReference type="ChEBI" id="CHEBI:33019"/>
        <dbReference type="ChEBI" id="CHEBI:57677"/>
        <dbReference type="ChEBI" id="CHEBI:57685"/>
        <dbReference type="ChEBI" id="CHEBI:58756"/>
        <dbReference type="EC" id="2.5.1.41"/>
    </reaction>
</comment>
<comment type="cofactor">
    <cofactor evidence="1">
        <name>Mg(2+)</name>
        <dbReference type="ChEBI" id="CHEBI:18420"/>
    </cofactor>
</comment>
<comment type="pathway">
    <text evidence="1">Membrane lipid metabolism; glycerophospholipid metabolism.</text>
</comment>
<comment type="subcellular location">
    <subcellularLocation>
        <location evidence="1">Cytoplasm</location>
    </subcellularLocation>
</comment>
<comment type="similarity">
    <text evidence="1">Belongs to the GGGP/HepGP synthase family. Group II subfamily.</text>
</comment>
<name>GGGPS_METVS</name>
<sequence length="254" mass="27582">MDLKIGKIETELNNILKKEGALYFVLIDPDEKNYAEVAEKVKDYADAIIIGGSIGITNLDEVTKNIKKITNLPVILFPGNVDGVTKEADAVLFMSLMNSKNTYWNMTAPTLGALTIKKYGLEAIPMAYLGIEPISKTAVGFVGEVNEIPQKKPEIASIYCLSASYFGMRWAYLEAGSGAEFPVSNEMILISKKLSGINLIVGGGIRSPDVAYEKVISGADVIVTGTLTEKNPDAVKEMKEAIKRAGKDKLKNKN</sequence>
<keyword id="KW-0963">Cytoplasm</keyword>
<keyword id="KW-0444">Lipid biosynthesis</keyword>
<keyword id="KW-0443">Lipid metabolism</keyword>
<keyword id="KW-0460">Magnesium</keyword>
<keyword id="KW-0479">Metal-binding</keyword>
<keyword id="KW-0594">Phospholipid biosynthesis</keyword>
<keyword id="KW-1208">Phospholipid metabolism</keyword>
<keyword id="KW-0808">Transferase</keyword>
<reference key="1">
    <citation type="submission" date="2007-06" db="EMBL/GenBank/DDBJ databases">
        <title>Complete sequence of Methanococcus vannielii SB.</title>
        <authorList>
            <consortium name="US DOE Joint Genome Institute"/>
            <person name="Copeland A."/>
            <person name="Lucas S."/>
            <person name="Lapidus A."/>
            <person name="Barry K."/>
            <person name="Glavina del Rio T."/>
            <person name="Dalin E."/>
            <person name="Tice H."/>
            <person name="Pitluck S."/>
            <person name="Chain P."/>
            <person name="Malfatti S."/>
            <person name="Shin M."/>
            <person name="Vergez L."/>
            <person name="Schmutz J."/>
            <person name="Larimer F."/>
            <person name="Land M."/>
            <person name="Hauser L."/>
            <person name="Kyrpides N."/>
            <person name="Anderson I."/>
            <person name="Sieprawska-Lupa M."/>
            <person name="Whitman W.B."/>
            <person name="Richardson P."/>
        </authorList>
    </citation>
    <scope>NUCLEOTIDE SEQUENCE [LARGE SCALE GENOMIC DNA]</scope>
    <source>
        <strain>ATCC 35089 / DSM 1224 / JCM 13029 / OCM 148 / SB</strain>
    </source>
</reference>
<dbReference type="EC" id="2.5.1.41" evidence="1"/>
<dbReference type="EMBL" id="CP000742">
    <property type="protein sequence ID" value="ABR55111.1"/>
    <property type="molecule type" value="Genomic_DNA"/>
</dbReference>
<dbReference type="RefSeq" id="WP_012066026.1">
    <property type="nucleotide sequence ID" value="NC_009634.1"/>
</dbReference>
<dbReference type="SMR" id="A6URI9"/>
<dbReference type="STRING" id="406327.Mevan_1213"/>
<dbReference type="GeneID" id="5325701"/>
<dbReference type="KEGG" id="mvn:Mevan_1213"/>
<dbReference type="eggNOG" id="arCOG01085">
    <property type="taxonomic scope" value="Archaea"/>
</dbReference>
<dbReference type="HOGENOM" id="CLU_068610_0_0_2"/>
<dbReference type="OrthoDB" id="7409at2157"/>
<dbReference type="UniPathway" id="UPA00940"/>
<dbReference type="Proteomes" id="UP000001107">
    <property type="component" value="Chromosome"/>
</dbReference>
<dbReference type="GO" id="GO:0005737">
    <property type="term" value="C:cytoplasm"/>
    <property type="evidence" value="ECO:0007669"/>
    <property type="project" value="UniProtKB-SubCell"/>
</dbReference>
<dbReference type="GO" id="GO:0000107">
    <property type="term" value="F:imidazoleglycerol-phosphate synthase activity"/>
    <property type="evidence" value="ECO:0007669"/>
    <property type="project" value="TreeGrafter"/>
</dbReference>
<dbReference type="GO" id="GO:0000287">
    <property type="term" value="F:magnesium ion binding"/>
    <property type="evidence" value="ECO:0007669"/>
    <property type="project" value="UniProtKB-UniRule"/>
</dbReference>
<dbReference type="GO" id="GO:0047294">
    <property type="term" value="F:phosphoglycerol geranylgeranyltransferase activity"/>
    <property type="evidence" value="ECO:0007669"/>
    <property type="project" value="UniProtKB-UniRule"/>
</dbReference>
<dbReference type="GO" id="GO:0046474">
    <property type="term" value="P:glycerophospholipid biosynthetic process"/>
    <property type="evidence" value="ECO:0007669"/>
    <property type="project" value="UniProtKB-UniRule"/>
</dbReference>
<dbReference type="CDD" id="cd02812">
    <property type="entry name" value="PcrB_like"/>
    <property type="match status" value="1"/>
</dbReference>
<dbReference type="Gene3D" id="3.20.20.390">
    <property type="entry name" value="FMN-linked oxidoreductases"/>
    <property type="match status" value="1"/>
</dbReference>
<dbReference type="HAMAP" id="MF_00112">
    <property type="entry name" value="GGGP_HepGP_synthase"/>
    <property type="match status" value="1"/>
</dbReference>
<dbReference type="InterPro" id="IPR038597">
    <property type="entry name" value="GGGP/HepGP_synthase_sf"/>
</dbReference>
<dbReference type="InterPro" id="IPR008205">
    <property type="entry name" value="GGGP_HepGP_synthase"/>
</dbReference>
<dbReference type="InterPro" id="IPR010946">
    <property type="entry name" value="GGGP_synth"/>
</dbReference>
<dbReference type="InterPro" id="IPR050064">
    <property type="entry name" value="IGPS_HisA/HisF"/>
</dbReference>
<dbReference type="NCBIfam" id="TIGR01769">
    <property type="entry name" value="GGGP"/>
    <property type="match status" value="1"/>
</dbReference>
<dbReference type="NCBIfam" id="TIGR01768">
    <property type="entry name" value="GGGP-family"/>
    <property type="match status" value="1"/>
</dbReference>
<dbReference type="NCBIfam" id="NF003198">
    <property type="entry name" value="PRK04169.1-2"/>
    <property type="match status" value="1"/>
</dbReference>
<dbReference type="NCBIfam" id="NF003201">
    <property type="entry name" value="PRK04169.1-5"/>
    <property type="match status" value="1"/>
</dbReference>
<dbReference type="PANTHER" id="PTHR21235:SF22">
    <property type="entry name" value="GERANYLGERANYLGLYCERYL PHOSPHATE SYNTHASE"/>
    <property type="match status" value="1"/>
</dbReference>
<dbReference type="PANTHER" id="PTHR21235">
    <property type="entry name" value="IMIDAZOLE GLYCEROL PHOSPHATE SYNTHASE SUBUNIT HISF/H IGP SYNTHASE SUBUNIT HISF/H"/>
    <property type="match status" value="1"/>
</dbReference>
<dbReference type="Pfam" id="PF01884">
    <property type="entry name" value="PcrB"/>
    <property type="match status" value="1"/>
</dbReference>
<dbReference type="SUPFAM" id="SSF51395">
    <property type="entry name" value="FMN-linked oxidoreductases"/>
    <property type="match status" value="1"/>
</dbReference>
<evidence type="ECO:0000255" key="1">
    <source>
        <dbReference type="HAMAP-Rule" id="MF_00112"/>
    </source>
</evidence>
<organism>
    <name type="scientific">Methanococcus vannielii (strain ATCC 35089 / DSM 1224 / JCM 13029 / OCM 148 / SB)</name>
    <dbReference type="NCBI Taxonomy" id="406327"/>
    <lineage>
        <taxon>Archaea</taxon>
        <taxon>Methanobacteriati</taxon>
        <taxon>Methanobacteriota</taxon>
        <taxon>Methanomada group</taxon>
        <taxon>Methanococci</taxon>
        <taxon>Methanococcales</taxon>
        <taxon>Methanococcaceae</taxon>
        <taxon>Methanococcus</taxon>
    </lineage>
</organism>
<gene>
    <name type="ordered locus">Mevan_1213</name>
</gene>
<proteinExistence type="inferred from homology"/>
<feature type="chain" id="PRO_1000015167" description="Geranylgeranylglyceryl phosphate synthase">
    <location>
        <begin position="1"/>
        <end position="254"/>
    </location>
</feature>
<feature type="binding site" evidence="1">
    <location>
        <position position="28"/>
    </location>
    <ligand>
        <name>Mg(2+)</name>
        <dbReference type="ChEBI" id="CHEBI:18420"/>
    </ligand>
</feature>
<feature type="binding site" evidence="1">
    <location>
        <position position="53"/>
    </location>
    <ligand>
        <name>Mg(2+)</name>
        <dbReference type="ChEBI" id="CHEBI:18420"/>
    </ligand>
</feature>
<feature type="binding site" evidence="1">
    <location>
        <begin position="172"/>
        <end position="178"/>
    </location>
    <ligand>
        <name>sn-glycerol 1-phosphate</name>
        <dbReference type="ChEBI" id="CHEBI:57685"/>
    </ligand>
</feature>
<feature type="binding site" evidence="1">
    <location>
        <begin position="203"/>
        <end position="204"/>
    </location>
    <ligand>
        <name>sn-glycerol 1-phosphate</name>
        <dbReference type="ChEBI" id="CHEBI:57685"/>
    </ligand>
</feature>
<feature type="binding site" evidence="1">
    <location>
        <begin position="225"/>
        <end position="226"/>
    </location>
    <ligand>
        <name>sn-glycerol 1-phosphate</name>
        <dbReference type="ChEBI" id="CHEBI:57685"/>
    </ligand>
</feature>
<accession>A6URI9</accession>